<organism>
    <name type="scientific">Salmonella paratyphi A (strain AKU_12601)</name>
    <dbReference type="NCBI Taxonomy" id="554290"/>
    <lineage>
        <taxon>Bacteria</taxon>
        <taxon>Pseudomonadati</taxon>
        <taxon>Pseudomonadota</taxon>
        <taxon>Gammaproteobacteria</taxon>
        <taxon>Enterobacterales</taxon>
        <taxon>Enterobacteriaceae</taxon>
        <taxon>Salmonella</taxon>
    </lineage>
</organism>
<dbReference type="EMBL" id="FM200053">
    <property type="protein sequence ID" value="CAR60497.1"/>
    <property type="molecule type" value="Genomic_DNA"/>
</dbReference>
<dbReference type="RefSeq" id="WP_000174696.1">
    <property type="nucleotide sequence ID" value="NC_011147.1"/>
</dbReference>
<dbReference type="SMR" id="B5BDQ0"/>
<dbReference type="KEGG" id="sek:SSPA2274"/>
<dbReference type="HOGENOM" id="CLU_136773_0_0_6"/>
<dbReference type="Proteomes" id="UP000001869">
    <property type="component" value="Chromosome"/>
</dbReference>
<dbReference type="GO" id="GO:0005737">
    <property type="term" value="C:cytoplasm"/>
    <property type="evidence" value="ECO:0007669"/>
    <property type="project" value="UniProtKB-SubCell"/>
</dbReference>
<dbReference type="GO" id="GO:0045893">
    <property type="term" value="P:positive regulation of DNA-templated transcription"/>
    <property type="evidence" value="ECO:0007669"/>
    <property type="project" value="UniProtKB-UniRule"/>
</dbReference>
<dbReference type="Gene3D" id="3.30.310.230">
    <property type="entry name" value="Sigma factor-binding protein Crl monomer"/>
    <property type="match status" value="1"/>
</dbReference>
<dbReference type="HAMAP" id="MF_01178">
    <property type="entry name" value="Crl"/>
    <property type="match status" value="1"/>
</dbReference>
<dbReference type="InterPro" id="IPR009986">
    <property type="entry name" value="Tscrpt_reg_Crl"/>
</dbReference>
<dbReference type="InterPro" id="IPR038208">
    <property type="entry name" value="Tscrpt_reg_Crl_sf"/>
</dbReference>
<dbReference type="NCBIfam" id="NF008217">
    <property type="entry name" value="PRK10984.1"/>
    <property type="match status" value="1"/>
</dbReference>
<dbReference type="Pfam" id="PF07417">
    <property type="entry name" value="Crl"/>
    <property type="match status" value="1"/>
</dbReference>
<evidence type="ECO:0000255" key="1">
    <source>
        <dbReference type="HAMAP-Rule" id="MF_01178"/>
    </source>
</evidence>
<protein>
    <recommendedName>
        <fullName evidence="1">Sigma factor-binding protein Crl</fullName>
    </recommendedName>
</protein>
<name>CRL_SALPK</name>
<gene>
    <name evidence="1" type="primary">crl</name>
    <name type="ordered locus">SSPA2274</name>
</gene>
<comment type="function">
    <text evidence="1">Binds to the sigma-S subunit of RNA polymerase, activating expression of sigma-S-regulated genes. Stimulates RNA polymerase holoenzyme formation and may bind to several other sigma factors, such as sigma-70 and sigma-32.</text>
</comment>
<comment type="subcellular location">
    <subcellularLocation>
        <location evidence="1">Cytoplasm</location>
    </subcellularLocation>
</comment>
<comment type="similarity">
    <text evidence="1">Belongs to the Crl family.</text>
</comment>
<keyword id="KW-0010">Activator</keyword>
<keyword id="KW-0175">Coiled coil</keyword>
<keyword id="KW-0963">Cytoplasm</keyword>
<keyword id="KW-0804">Transcription</keyword>
<keyword id="KW-0805">Transcription regulation</keyword>
<accession>B5BDQ0</accession>
<sequence length="133" mass="15797">MTLPSGHPKSRLIKKFTALGPYIREGQCEDNRFFFDCLAVCVNVKPAPEKREFWGWWMELEAQEKRFTYRYQFGLFDKEGNWTVVPINETEVVERLEYTLREFHEKLRDLLISMELALEPSDDFNDEPVKLSA</sequence>
<reference key="1">
    <citation type="journal article" date="2009" name="BMC Genomics">
        <title>Pseudogene accumulation in the evolutionary histories of Salmonella enterica serovars Paratyphi A and Typhi.</title>
        <authorList>
            <person name="Holt K.E."/>
            <person name="Thomson N.R."/>
            <person name="Wain J."/>
            <person name="Langridge G.C."/>
            <person name="Hasan R."/>
            <person name="Bhutta Z.A."/>
            <person name="Quail M.A."/>
            <person name="Norbertczak H."/>
            <person name="Walker D."/>
            <person name="Simmonds M."/>
            <person name="White B."/>
            <person name="Bason N."/>
            <person name="Mungall K."/>
            <person name="Dougan G."/>
            <person name="Parkhill J."/>
        </authorList>
    </citation>
    <scope>NUCLEOTIDE SEQUENCE [LARGE SCALE GENOMIC DNA]</scope>
    <source>
        <strain>AKU_12601</strain>
    </source>
</reference>
<feature type="chain" id="PRO_1000138149" description="Sigma factor-binding protein Crl">
    <location>
        <begin position="1"/>
        <end position="133"/>
    </location>
</feature>
<feature type="region of interest" description="Essential for activity" evidence="1">
    <location>
        <begin position="99"/>
        <end position="122"/>
    </location>
</feature>
<feature type="coiled-coil region" evidence="1">
    <location>
        <begin position="90"/>
        <end position="111"/>
    </location>
</feature>
<proteinExistence type="inferred from homology"/>